<reference key="1">
    <citation type="journal article" date="1991" name="Science">
        <title>A G protein-linked receptor for parathyroid hormone and parathyroid hormone-related peptide.</title>
        <authorList>
            <person name="Jueppner H."/>
            <person name="Abou-Samra A.-B."/>
            <person name="Freeman M."/>
            <person name="Kong X.-F."/>
            <person name="Schipani E."/>
            <person name="Richards J."/>
            <person name="Kolakowski L.F. Jr."/>
            <person name="Hock J."/>
            <person name="Potts J.T. Jr."/>
            <person name="Kronenberg H.M."/>
            <person name="Segre G.V."/>
        </authorList>
    </citation>
    <scope>NUCLEOTIDE SEQUENCE [MRNA]</scope>
    <scope>FUNCTION</scope>
    <scope>SUBCELLULAR LOCATION</scope>
</reference>
<keyword id="KW-1003">Cell membrane</keyword>
<keyword id="KW-1015">Disulfide bond</keyword>
<keyword id="KW-0297">G-protein coupled receptor</keyword>
<keyword id="KW-0325">Glycoprotein</keyword>
<keyword id="KW-0472">Membrane</keyword>
<keyword id="KW-0675">Receptor</keyword>
<keyword id="KW-0732">Signal</keyword>
<keyword id="KW-0807">Transducer</keyword>
<keyword id="KW-0812">Transmembrane</keyword>
<keyword id="KW-1133">Transmembrane helix</keyword>
<gene>
    <name type="primary">PTH1R</name>
    <name type="synonym">PTHR</name>
    <name type="synonym">PTHR1</name>
</gene>
<evidence type="ECO:0000250" key="1"/>
<evidence type="ECO:0000250" key="2">
    <source>
        <dbReference type="UniProtKB" id="Q03431"/>
    </source>
</evidence>
<evidence type="ECO:0000255" key="3"/>
<evidence type="ECO:0000256" key="4">
    <source>
        <dbReference type="SAM" id="MobiDB-lite"/>
    </source>
</evidence>
<evidence type="ECO:0000269" key="5">
    <source>
    </source>
</evidence>
<evidence type="ECO:0000305" key="6"/>
<dbReference type="EMBL" id="M74445">
    <property type="protein sequence ID" value="AAA30979.1"/>
    <property type="molecule type" value="mRNA"/>
</dbReference>
<dbReference type="PIR" id="A39286">
    <property type="entry name" value="A39286"/>
</dbReference>
<dbReference type="SMR" id="P25107"/>
<dbReference type="IntAct" id="P25107">
    <property type="interactions" value="1"/>
</dbReference>
<dbReference type="MINT" id="P25107"/>
<dbReference type="GlyCosmos" id="P25107">
    <property type="glycosylation" value="4 sites, No reported glycans"/>
</dbReference>
<dbReference type="iPTMnet" id="P25107"/>
<dbReference type="GO" id="GO:0005886">
    <property type="term" value="C:plasma membrane"/>
    <property type="evidence" value="ECO:0000250"/>
    <property type="project" value="UniProtKB"/>
</dbReference>
<dbReference type="GO" id="GO:0008528">
    <property type="term" value="F:G protein-coupled peptide receptor activity"/>
    <property type="evidence" value="ECO:0007669"/>
    <property type="project" value="TreeGrafter"/>
</dbReference>
<dbReference type="GO" id="GO:0004991">
    <property type="term" value="F:parathyroid hormone receptor activity"/>
    <property type="evidence" value="ECO:0000250"/>
    <property type="project" value="UniProtKB"/>
</dbReference>
<dbReference type="GO" id="GO:0017046">
    <property type="term" value="F:peptide hormone binding"/>
    <property type="evidence" value="ECO:0000250"/>
    <property type="project" value="UniProtKB"/>
</dbReference>
<dbReference type="GO" id="GO:0042803">
    <property type="term" value="F:protein homodimerization activity"/>
    <property type="evidence" value="ECO:0000250"/>
    <property type="project" value="UniProtKB"/>
</dbReference>
<dbReference type="GO" id="GO:0007189">
    <property type="term" value="P:adenylate cyclase-activating G protein-coupled receptor signaling pathway"/>
    <property type="evidence" value="ECO:0000250"/>
    <property type="project" value="UniProtKB"/>
</dbReference>
<dbReference type="GO" id="GO:0007188">
    <property type="term" value="P:adenylate cyclase-modulating G protein-coupled receptor signaling pathway"/>
    <property type="evidence" value="ECO:0000250"/>
    <property type="project" value="UniProtKB"/>
</dbReference>
<dbReference type="GO" id="GO:0007166">
    <property type="term" value="P:cell surface receptor signaling pathway"/>
    <property type="evidence" value="ECO:0007669"/>
    <property type="project" value="InterPro"/>
</dbReference>
<dbReference type="GO" id="GO:0006874">
    <property type="term" value="P:intracellular calcium ion homeostasis"/>
    <property type="evidence" value="ECO:0007669"/>
    <property type="project" value="TreeGrafter"/>
</dbReference>
<dbReference type="CDD" id="cd15984">
    <property type="entry name" value="7tmB1_PTH1R"/>
    <property type="match status" value="1"/>
</dbReference>
<dbReference type="FunFam" id="1.20.1070.10:FF:000070">
    <property type="entry name" value="Parathyroid hormone/parathyroid hormone-related peptide receptor"/>
    <property type="match status" value="1"/>
</dbReference>
<dbReference type="Gene3D" id="4.10.1240.10">
    <property type="entry name" value="GPCR, family 2, extracellular hormone receptor domain"/>
    <property type="match status" value="1"/>
</dbReference>
<dbReference type="Gene3D" id="1.20.1070.10">
    <property type="entry name" value="Rhodopsin 7-helix transmembrane proteins"/>
    <property type="match status" value="1"/>
</dbReference>
<dbReference type="InterPro" id="IPR050332">
    <property type="entry name" value="GPCR_2"/>
</dbReference>
<dbReference type="InterPro" id="IPR017981">
    <property type="entry name" value="GPCR_2-like_7TM"/>
</dbReference>
<dbReference type="InterPro" id="IPR036445">
    <property type="entry name" value="GPCR_2_extracell_dom_sf"/>
</dbReference>
<dbReference type="InterPro" id="IPR001879">
    <property type="entry name" value="GPCR_2_extracellular_dom"/>
</dbReference>
<dbReference type="InterPro" id="IPR002170">
    <property type="entry name" value="GPCR_2_parathyroid_rcpt"/>
</dbReference>
<dbReference type="InterPro" id="IPR000832">
    <property type="entry name" value="GPCR_2_secretin-like"/>
</dbReference>
<dbReference type="InterPro" id="IPR017983">
    <property type="entry name" value="GPCR_2_secretin-like_CS"/>
</dbReference>
<dbReference type="PANTHER" id="PTHR45620:SF27">
    <property type="entry name" value="PARATHYROID HORMONE_PARATHYROID HORMONE-RELATED PEPTIDE RECEPTOR"/>
    <property type="match status" value="1"/>
</dbReference>
<dbReference type="PANTHER" id="PTHR45620">
    <property type="entry name" value="PDF RECEPTOR-LIKE PROTEIN-RELATED"/>
    <property type="match status" value="1"/>
</dbReference>
<dbReference type="Pfam" id="PF00002">
    <property type="entry name" value="7tm_2"/>
    <property type="match status" value="1"/>
</dbReference>
<dbReference type="Pfam" id="PF02793">
    <property type="entry name" value="HRM"/>
    <property type="match status" value="1"/>
</dbReference>
<dbReference type="PRINTS" id="PR00249">
    <property type="entry name" value="GPCRSECRETIN"/>
</dbReference>
<dbReference type="PRINTS" id="PR00393">
    <property type="entry name" value="PTRHORMONER"/>
</dbReference>
<dbReference type="SMART" id="SM00008">
    <property type="entry name" value="HormR"/>
    <property type="match status" value="1"/>
</dbReference>
<dbReference type="SUPFAM" id="SSF81321">
    <property type="entry name" value="Family A G protein-coupled receptor-like"/>
    <property type="match status" value="1"/>
</dbReference>
<dbReference type="SUPFAM" id="SSF111418">
    <property type="entry name" value="Hormone receptor domain"/>
    <property type="match status" value="1"/>
</dbReference>
<dbReference type="PROSITE" id="PS00649">
    <property type="entry name" value="G_PROTEIN_RECEP_F2_1"/>
    <property type="match status" value="1"/>
</dbReference>
<dbReference type="PROSITE" id="PS00650">
    <property type="entry name" value="G_PROTEIN_RECEP_F2_2"/>
    <property type="match status" value="1"/>
</dbReference>
<dbReference type="PROSITE" id="PS50227">
    <property type="entry name" value="G_PROTEIN_RECEP_F2_3"/>
    <property type="match status" value="1"/>
</dbReference>
<dbReference type="PROSITE" id="PS50261">
    <property type="entry name" value="G_PROTEIN_RECEP_F2_4"/>
    <property type="match status" value="1"/>
</dbReference>
<protein>
    <recommendedName>
        <fullName>Parathyroid hormone/parathyroid hormone-related peptide receptor</fullName>
    </recommendedName>
    <alternativeName>
        <fullName>PTH/PTHrP type I receptor</fullName>
        <shortName>PTH/PTHr receptor</shortName>
    </alternativeName>
    <alternativeName>
        <fullName>Parathyroid hormone 1 receptor</fullName>
        <shortName>PTH1 receptor</shortName>
    </alternativeName>
</protein>
<feature type="signal peptide" evidence="3">
    <location>
        <begin position="1"/>
        <end position="26"/>
    </location>
</feature>
<feature type="chain" id="PRO_0000012844" description="Parathyroid hormone/parathyroid hormone-related peptide receptor">
    <location>
        <begin position="27"/>
        <end position="585"/>
    </location>
</feature>
<feature type="topological domain" description="Extracellular" evidence="3">
    <location>
        <begin position="27"/>
        <end position="185"/>
    </location>
</feature>
<feature type="transmembrane region" description="Helical; Name=1" evidence="3">
    <location>
        <begin position="186"/>
        <end position="209"/>
    </location>
</feature>
<feature type="topological domain" description="Cytoplasmic" evidence="3">
    <location>
        <begin position="210"/>
        <end position="216"/>
    </location>
</feature>
<feature type="transmembrane region" description="Helical; Name=2" evidence="3">
    <location>
        <begin position="217"/>
        <end position="236"/>
    </location>
</feature>
<feature type="topological domain" description="Extracellular" evidence="3">
    <location>
        <begin position="237"/>
        <end position="276"/>
    </location>
</feature>
<feature type="transmembrane region" description="Helical; Name=3" evidence="3">
    <location>
        <begin position="277"/>
        <end position="300"/>
    </location>
</feature>
<feature type="topological domain" description="Cytoplasmic" evidence="3">
    <location>
        <begin position="301"/>
        <end position="314"/>
    </location>
</feature>
<feature type="transmembrane region" description="Helical; Name=4" evidence="3">
    <location>
        <begin position="315"/>
        <end position="336"/>
    </location>
</feature>
<feature type="topological domain" description="Extracellular" evidence="3">
    <location>
        <begin position="337"/>
        <end position="355"/>
    </location>
</feature>
<feature type="transmembrane region" description="Helical; Name=5" evidence="3">
    <location>
        <begin position="356"/>
        <end position="376"/>
    </location>
</feature>
<feature type="topological domain" description="Cytoplasmic" evidence="3">
    <location>
        <begin position="377"/>
        <end position="403"/>
    </location>
</feature>
<feature type="transmembrane region" description="Helical; Name=6" evidence="3">
    <location>
        <begin position="404"/>
        <end position="422"/>
    </location>
</feature>
<feature type="topological domain" description="Extracellular" evidence="3">
    <location>
        <begin position="423"/>
        <end position="434"/>
    </location>
</feature>
<feature type="transmembrane region" description="Helical; Name=7" evidence="3">
    <location>
        <begin position="435"/>
        <end position="457"/>
    </location>
</feature>
<feature type="topological domain" description="Cytoplasmic" evidence="3">
    <location>
        <begin position="458"/>
        <end position="585"/>
    </location>
</feature>
<feature type="region of interest" description="Disordered" evidence="4">
    <location>
        <begin position="69"/>
        <end position="90"/>
    </location>
</feature>
<feature type="region of interest" description="Disordered" evidence="4">
    <location>
        <begin position="531"/>
        <end position="585"/>
    </location>
</feature>
<feature type="short sequence motif" description="Important for interaction with G proteins" evidence="1">
    <location>
        <begin position="468"/>
        <end position="471"/>
    </location>
</feature>
<feature type="glycosylation site" description="N-linked (GlcNAc...) asparagine" evidence="3">
    <location>
        <position position="148"/>
    </location>
</feature>
<feature type="glycosylation site" description="N-linked (GlcNAc...) asparagine" evidence="3">
    <location>
        <position position="158"/>
    </location>
</feature>
<feature type="glycosylation site" description="N-linked (GlcNAc...) asparagine" evidence="3">
    <location>
        <position position="163"/>
    </location>
</feature>
<feature type="glycosylation site" description="N-linked (GlcNAc...) asparagine" evidence="3">
    <location>
        <position position="173"/>
    </location>
</feature>
<feature type="disulfide bond" evidence="2">
    <location>
        <begin position="48"/>
        <end position="114"/>
    </location>
</feature>
<feature type="disulfide bond" evidence="2">
    <location>
        <begin position="105"/>
        <end position="145"/>
    </location>
</feature>
<feature type="disulfide bond" evidence="2">
    <location>
        <begin position="128"/>
        <end position="167"/>
    </location>
</feature>
<sequence length="585" mass="65963">MGAPRISHSLALLLCCSVLSSVYALVDADDVITKEEQIILLRNAQAQCEQRLKEVLRVPELAESAKDWMSRSAKTKKEKPAEKLYSQAEESREVSDRSRLQDGFCLPEWDNIVCWPAGVPGKVVAVPCPDYIYDFNHKGRAYRRCDSNGSWELVPGNNRTWANYSECVKFLTNETREREVFDRLGMIYTVGYSISLGSLTVAVLILGYFRRLHCTRNYIHMHLFVSFMLRAVSIFIKDAVLYSGVSTDEIERITEEELRAFTEPPPADKAGFVGCRVAVTVFLYFLTTNYYWILVEGLYLHSLIFMAFFSEKKYLWGFTLFGWGLPAVFVAVWVTVRATLANTECWDLSSGNKKWIIQVPILAAIVVNFILFINIIRVLATKLRETNAGRCDTRQQYRKLLKSTLVLMPLFGVHYIVFMATPYTEVSGILWQVQMHYEMLFNSFQGFFVAIIYCFCNGEVQAEIKKSWSRWTLALDFKRKARSGSSTYSYGPMVSHTSVTNVGPRGGLALSLSPRLAPGAGASANGHHQLPGYVKHGSISENSLPSSGPEPGTKDDGYLNGSGLYEPMVGEQPPPLLEEERETVM</sequence>
<name>PTH1R_DIDVI</name>
<accession>P25107</accession>
<organism>
    <name type="scientific">Didelphis virginiana</name>
    <name type="common">North American opossum</name>
    <name type="synonym">Didelphis marsupialis virginiana</name>
    <dbReference type="NCBI Taxonomy" id="9267"/>
    <lineage>
        <taxon>Eukaryota</taxon>
        <taxon>Metazoa</taxon>
        <taxon>Chordata</taxon>
        <taxon>Craniata</taxon>
        <taxon>Vertebrata</taxon>
        <taxon>Euteleostomi</taxon>
        <taxon>Mammalia</taxon>
        <taxon>Metatheria</taxon>
        <taxon>Didelphimorphia</taxon>
        <taxon>Didelphidae</taxon>
        <taxon>Didelphis</taxon>
    </lineage>
</organism>
<proteinExistence type="evidence at transcript level"/>
<comment type="function">
    <text evidence="2 5">G-protein-coupled receptor for parathyroid hormone (PTH) and for parathyroid hormone-related peptide (PTHLH) (PubMed:1658941). Ligand binding causes a conformation change that triggers signaling via guanine nucleotide-binding proteins (G proteins) and modulates the activity of downstream effectors, such as adenylate cyclase (cAMP) (By similarity). PTH1R is coupled to G(s) G alpha proteins and mediates activation of adenylate cyclase activity (By similarity). PTHLH dissociates from PTH1R more rapidly than PTH; as consequence, the cAMP response induced by PTHLH decays faster than the response induced by PTH (By similarity).</text>
</comment>
<comment type="subunit">
    <text evidence="2">Homodimer in the absence of bound ligand. Peptide hormone binding leads to dissociation of the homodimer.</text>
</comment>
<comment type="subcellular location">
    <subcellularLocation>
        <location evidence="5">Cell membrane</location>
        <topology evidence="6">Multi-pass membrane protein</topology>
    </subcellularLocation>
</comment>
<comment type="PTM">
    <text evidence="2">N-glycosylated.</text>
</comment>
<comment type="similarity">
    <text evidence="6">Belongs to the G-protein coupled receptor 2 family.</text>
</comment>